<accession>A4IGN3</accession>
<reference key="1">
    <citation type="submission" date="2007-03" db="EMBL/GenBank/DDBJ databases">
        <authorList>
            <consortium name="NIH - Xenopus Gene Collection (XGC) project"/>
        </authorList>
    </citation>
    <scope>NUCLEOTIDE SEQUENCE [LARGE SCALE MRNA]</scope>
    <source>
        <tissue>Tadpole</tissue>
    </source>
</reference>
<organism>
    <name type="scientific">Xenopus tropicalis</name>
    <name type="common">Western clawed frog</name>
    <name type="synonym">Silurana tropicalis</name>
    <dbReference type="NCBI Taxonomy" id="8364"/>
    <lineage>
        <taxon>Eukaryota</taxon>
        <taxon>Metazoa</taxon>
        <taxon>Chordata</taxon>
        <taxon>Craniata</taxon>
        <taxon>Vertebrata</taxon>
        <taxon>Euteleostomi</taxon>
        <taxon>Amphibia</taxon>
        <taxon>Batrachia</taxon>
        <taxon>Anura</taxon>
        <taxon>Pipoidea</taxon>
        <taxon>Pipidae</taxon>
        <taxon>Xenopodinae</taxon>
        <taxon>Xenopus</taxon>
        <taxon>Silurana</taxon>
    </lineage>
</organism>
<evidence type="ECO:0000305" key="1"/>
<keyword id="KW-1185">Reference proteome</keyword>
<proteinExistence type="evidence at transcript level"/>
<protein>
    <recommendedName>
        <fullName>UPF0538 protein C2orf76 homolog</fullName>
    </recommendedName>
</protein>
<sequence length="126" mass="14367">MMPGGATVTVRLVRSFEHRNFRPVVYHGVNLDQTVREFIVQINEDIPHRAALPLPFKKYSYDTLKIIHQPHGAKTNELVVGLEDDERLILAPGGTLREAGVAHETELAFFCHKDYQTYKANPVSKW</sequence>
<comment type="similarity">
    <text evidence="1">Belongs to the UPF0538 family.</text>
</comment>
<feature type="chain" id="PRO_0000325829" description="UPF0538 protein C2orf76 homolog">
    <location>
        <begin position="1"/>
        <end position="126"/>
    </location>
</feature>
<dbReference type="EMBL" id="BC135177">
    <property type="protein sequence ID" value="AAI35178.1"/>
    <property type="molecule type" value="mRNA"/>
</dbReference>
<dbReference type="RefSeq" id="NP_001090788.1">
    <property type="nucleotide sequence ID" value="NM_001097319.1"/>
</dbReference>
<dbReference type="RefSeq" id="XP_031748292.1">
    <property type="nucleotide sequence ID" value="XM_031892432.1"/>
</dbReference>
<dbReference type="RefSeq" id="XP_031748293.1">
    <property type="nucleotide sequence ID" value="XM_031892433.1"/>
</dbReference>
<dbReference type="FunCoup" id="A4IGN3">
    <property type="interactions" value="408"/>
</dbReference>
<dbReference type="GeneID" id="100037880"/>
<dbReference type="KEGG" id="xtr:100037880"/>
<dbReference type="CTD" id="102356561"/>
<dbReference type="InParanoid" id="A4IGN3"/>
<dbReference type="OMA" id="YRNVKNH"/>
<dbReference type="OrthoDB" id="937at2759"/>
<dbReference type="Proteomes" id="UP000008143">
    <property type="component" value="Chromosome 9"/>
</dbReference>
<dbReference type="InterPro" id="IPR018794">
    <property type="entry name" value="UPF0538"/>
</dbReference>
<dbReference type="PANTHER" id="PTHR18444">
    <property type="entry name" value="UPF0538 FAMILY MEMBER"/>
    <property type="match status" value="1"/>
</dbReference>
<dbReference type="PANTHER" id="PTHR18444:SF9">
    <property type="entry name" value="UPF0538 PROTEIN C2ORF76"/>
    <property type="match status" value="1"/>
</dbReference>
<dbReference type="Pfam" id="PF10209">
    <property type="entry name" value="DUF2340"/>
    <property type="match status" value="1"/>
</dbReference>
<name>CB076_XENTR</name>